<feature type="chain" id="PRO_0000047339" description="Zinc finger protein 17">
    <location>
        <begin position="1"/>
        <end position="662"/>
    </location>
</feature>
<feature type="domain" description="KRAB" evidence="2">
    <location>
        <begin position="8"/>
        <end position="101"/>
    </location>
</feature>
<feature type="zinc finger region" description="C2H2-type 1" evidence="1">
    <location>
        <begin position="190"/>
        <end position="212"/>
    </location>
</feature>
<feature type="zinc finger region" description="C2H2-type 2" evidence="1">
    <location>
        <begin position="218"/>
        <end position="240"/>
    </location>
</feature>
<feature type="zinc finger region" description="C2H2-type 3" evidence="1">
    <location>
        <begin position="246"/>
        <end position="268"/>
    </location>
</feature>
<feature type="zinc finger region" description="C2H2-type 4" evidence="1">
    <location>
        <begin position="274"/>
        <end position="296"/>
    </location>
</feature>
<feature type="zinc finger region" description="C2H2-type 5" evidence="1">
    <location>
        <begin position="302"/>
        <end position="324"/>
    </location>
</feature>
<feature type="zinc finger region" description="C2H2-type 7" evidence="1">
    <location>
        <begin position="358"/>
        <end position="380"/>
    </location>
</feature>
<feature type="zinc finger region" description="C2H2-type 8" evidence="1">
    <location>
        <begin position="386"/>
        <end position="408"/>
    </location>
</feature>
<feature type="zinc finger region" description="C2H2-type 9" evidence="1">
    <location>
        <begin position="414"/>
        <end position="436"/>
    </location>
</feature>
<feature type="zinc finger region" description="C2H2-type 10" evidence="1">
    <location>
        <begin position="442"/>
        <end position="464"/>
    </location>
</feature>
<feature type="zinc finger region" description="C2H2-type 11" evidence="1">
    <location>
        <begin position="470"/>
        <end position="492"/>
    </location>
</feature>
<feature type="zinc finger region" description="C2H2-type 12" evidence="1">
    <location>
        <begin position="498"/>
        <end position="520"/>
    </location>
</feature>
<feature type="zinc finger region" description="C2H2-type 13" evidence="1">
    <location>
        <begin position="526"/>
        <end position="548"/>
    </location>
</feature>
<feature type="zinc finger region" description="C2H2-type 14" evidence="1">
    <location>
        <begin position="554"/>
        <end position="576"/>
    </location>
</feature>
<feature type="zinc finger region" description="C2H2-type 15" evidence="1">
    <location>
        <begin position="582"/>
        <end position="604"/>
    </location>
</feature>
<feature type="zinc finger region" description="C2H2-type 16" evidence="1">
    <location>
        <begin position="610"/>
        <end position="632"/>
    </location>
</feature>
<feature type="zinc finger region" description="C2H2-type 17" evidence="1">
    <location>
        <begin position="638"/>
        <end position="660"/>
    </location>
</feature>
<feature type="splice variant" id="VSP_036652" description="In isoform 3." evidence="3">
    <original>MNLTEDYMVFEDVAIHFSQEEWGILNDVQRHLHSDVMLENFALLSSV</original>
    <variation>MGLPLPSKVIMHFMSISVL</variation>
    <location>
        <begin position="1"/>
        <end position="47"/>
    </location>
</feature>
<feature type="splice variant" id="VSP_036651" description="In isoform 2." evidence="3">
    <original>MNLTE</original>
    <variation>MLMDAGQ</variation>
    <location>
        <begin position="1"/>
        <end position="5"/>
    </location>
</feature>
<feature type="sequence variant" id="VAR_057382" description="In dbSNP:rs2014827.">
    <original>T</original>
    <variation>K</variation>
    <location>
        <position position="148"/>
    </location>
</feature>
<feature type="sequence conflict" description="In Ref. 1; BAC05252." evidence="4" ref="1">
    <original>I</original>
    <variation>T</variation>
    <location>
        <position position="96"/>
    </location>
</feature>
<feature type="sequence conflict" description="In Ref. 1; BAG54604." evidence="4" ref="1">
    <original>F</original>
    <variation>S</variation>
    <location>
        <position position="394"/>
    </location>
</feature>
<feature type="sequence conflict" description="In Ref. 1; BAG54682." evidence="4" ref="1">
    <original>R</original>
    <variation>G</variation>
    <location>
        <position position="552"/>
    </location>
</feature>
<keyword id="KW-0025">Alternative splicing</keyword>
<keyword id="KW-0238">DNA-binding</keyword>
<keyword id="KW-0479">Metal-binding</keyword>
<keyword id="KW-0539">Nucleus</keyword>
<keyword id="KW-1267">Proteomics identification</keyword>
<keyword id="KW-1185">Reference proteome</keyword>
<keyword id="KW-0677">Repeat</keyword>
<keyword id="KW-0804">Transcription</keyword>
<keyword id="KW-0805">Transcription regulation</keyword>
<keyword id="KW-0862">Zinc</keyword>
<keyword id="KW-0863">Zinc-finger</keyword>
<name>ZNF17_HUMAN</name>
<comment type="function">
    <text>May be involved in transcriptional regulation.</text>
</comment>
<comment type="interaction">
    <interactant intactId="EBI-1105334">
        <id>P17021</id>
    </interactant>
    <interactant intactId="EBI-8643161">
        <id>Q9NX04</id>
        <label>AIRIM</label>
    </interactant>
    <organismsDiffer>false</organismsDiffer>
    <experiments>3</experiments>
</comment>
<comment type="interaction">
    <interactant intactId="EBI-1105334">
        <id>P17021</id>
    </interactant>
    <interactant intactId="EBI-739624">
        <id>Q8NHQ1</id>
        <label>CEP70</label>
    </interactant>
    <organismsDiffer>false</organismsDiffer>
    <experiments>3</experiments>
</comment>
<comment type="interaction">
    <interactant intactId="EBI-1105334">
        <id>P17021</id>
    </interactant>
    <interactant intactId="EBI-5916454">
        <id>A6NEM1</id>
        <label>GOLGA6L9</label>
    </interactant>
    <organismsDiffer>false</organismsDiffer>
    <experiments>3</experiments>
</comment>
<comment type="interaction">
    <interactant intactId="EBI-1105334">
        <id>P17021</id>
    </interactant>
    <interactant intactId="EBI-10171697">
        <id>Q6A162</id>
        <label>KRT40</label>
    </interactant>
    <organismsDiffer>false</organismsDiffer>
    <experiments>3</experiments>
</comment>
<comment type="interaction">
    <interactant intactId="EBI-1105334">
        <id>P17021</id>
    </interactant>
    <interactant intactId="EBI-11522433">
        <id>Q5JR59-3</id>
        <label>MTUS2</label>
    </interactant>
    <organismsDiffer>false</organismsDiffer>
    <experiments>3</experiments>
</comment>
<comment type="interaction">
    <interactant intactId="EBI-1105334">
        <id>P17021</id>
    </interactant>
    <interactant intactId="EBI-748974">
        <id>Q96CV9</id>
        <label>OPTN</label>
    </interactant>
    <organismsDiffer>false</organismsDiffer>
    <experiments>3</experiments>
</comment>
<comment type="interaction">
    <interactant intactId="EBI-1105334">
        <id>P17021</id>
    </interactant>
    <interactant intactId="EBI-79165">
        <id>Q9NRD5</id>
        <label>PICK1</label>
    </interactant>
    <organismsDiffer>false</organismsDiffer>
    <experiments>3</experiments>
</comment>
<comment type="interaction">
    <interactant intactId="EBI-1105334">
        <id>P17021</id>
    </interactant>
    <interactant intactId="EBI-7481343">
        <id>Q01105-2</id>
        <label>SET</label>
    </interactant>
    <organismsDiffer>false</organismsDiffer>
    <experiments>3</experiments>
</comment>
<comment type="interaction">
    <interactant intactId="EBI-1105334">
        <id>P17021</id>
    </interactant>
    <interactant intactId="EBI-716093">
        <id>P13994</id>
        <label>YJU2B</label>
    </interactant>
    <organismsDiffer>false</organismsDiffer>
    <experiments>3</experiments>
</comment>
<comment type="interaction">
    <interactant intactId="EBI-1105334">
        <id>P17021</id>
    </interactant>
    <interactant intactId="EBI-11962468">
        <id>Q7Z4V0</id>
        <label>ZNF438</label>
    </interactant>
    <organismsDiffer>false</organismsDiffer>
    <experiments>3</experiments>
</comment>
<comment type="interaction">
    <interactant intactId="EBI-1105334">
        <id>P17021</id>
    </interactant>
    <interactant intactId="EBI-11962574">
        <id>Q96EG3</id>
        <label>ZNF837</label>
    </interactant>
    <organismsDiffer>false</organismsDiffer>
    <experiments>3</experiments>
</comment>
<comment type="interaction">
    <interactant intactId="EBI-1105334">
        <id>P17021</id>
    </interactant>
    <interactant intactId="EBI-527853">
        <id>Q9UGI0</id>
        <label>ZRANB1</label>
    </interactant>
    <organismsDiffer>false</organismsDiffer>
    <experiments>3</experiments>
</comment>
<comment type="subcellular location">
    <subcellularLocation>
        <location evidence="4">Nucleus</location>
    </subcellularLocation>
</comment>
<comment type="alternative products">
    <event type="alternative splicing"/>
    <isoform>
        <id>P17021-1</id>
        <name>1</name>
        <sequence type="displayed"/>
    </isoform>
    <isoform>
        <id>P17021-2</id>
        <name>2</name>
        <sequence type="described" ref="VSP_036651"/>
    </isoform>
    <isoform>
        <id>P17021-3</id>
        <name>3</name>
        <sequence type="described" ref="VSP_036652"/>
    </isoform>
</comment>
<comment type="similarity">
    <text evidence="4">Belongs to the krueppel C2H2-type zinc-finger protein family.</text>
</comment>
<comment type="sequence caution" evidence="4">
    <conflict type="erroneous initiation">
        <sequence resource="EMBL-CDS" id="BAC04956"/>
    </conflict>
</comment>
<comment type="sequence caution" evidence="4">
    <conflict type="erroneous termination">
        <sequence resource="EMBL-CDS" id="BAC05252"/>
    </conflict>
    <text>Truncated C-terminus.</text>
</comment>
<sequence length="662" mass="77204">MNLTEDYMVFEDVAIHFSQEEWGILNDVQRHLHSDVMLENFALLSSVGCWHGAKDEEAPSKQCVSVGVSQVTTLKPALSTQKAQPCETCSSLLKDILHLAEHDGTHPKRTAKLYLHQKEHLREKLTRSDEGRPSFVNDSVHLAKRNLTCMQGGKDFTGDSDLQQQALHSGWKPHRDTHGVEAFQSGQNNYSCTQCGKDFCHQHTLFEHQKIHTEERPYECSECGKLFRYNSDLIKHQRNHTGERPYKCSECGKAFSLKYNVVQHQKIHTGERPYECSECGKAFLRKSHLLQHQRIHTRPRPYVCSECGKAFLTQAHLVGHQKIHTGERPYGCNECGKYFMYSSALIRHQKVHTGERPFYCCECGKFFMDSCTLIIHQRVHTGEKPYECNECGKFFRYRSTLIRHQKVHTGEKPYECSECGKFFMDTSTLIIHQRVHTGEKPYECNKCGKFFRYCFTLNRHQRVHSGERPYECSECGKFFVDSCTLKSHQRVHTGERPFECSICGKSFRCRSTLDTHQRIHTGERPYECSECGKFFRHNSNHIRHRRNHFGERSFECTECGRVFSQNSHLIRHQKVHTRERTYKCSKCGKFFMDSSTLISHERVHTGEKPYECSECGKVFRYNSSLIKHRRIHTGERPYQCSECGRVFNQNSHLIQHQKVHTR</sequence>
<evidence type="ECO:0000255" key="1">
    <source>
        <dbReference type="PROSITE-ProRule" id="PRU00042"/>
    </source>
</evidence>
<evidence type="ECO:0000255" key="2">
    <source>
        <dbReference type="PROSITE-ProRule" id="PRU00119"/>
    </source>
</evidence>
<evidence type="ECO:0000303" key="3">
    <source>
    </source>
</evidence>
<evidence type="ECO:0000305" key="4"/>
<protein>
    <recommendedName>
        <fullName>Zinc finger protein 17</fullName>
    </recommendedName>
    <alternativeName>
        <fullName>Zinc finger protein HPF3</fullName>
    </alternativeName>
    <alternativeName>
        <fullName>Zinc finger protein KOX10</fullName>
    </alternativeName>
</protein>
<accession>P17021</accession>
<accession>B3KXU2</accession>
<accession>B3KY20</accession>
<accession>Q8N7M1</accession>
<accession>Q8N893</accession>
<accession>Q8TF54</accession>
<dbReference type="EMBL" id="AK097123">
    <property type="protein sequence ID" value="BAC04956.1"/>
    <property type="status" value="ALT_INIT"/>
    <property type="molecule type" value="mRNA"/>
</dbReference>
<dbReference type="EMBL" id="AK098183">
    <property type="protein sequence ID" value="BAC05252.1"/>
    <property type="status" value="ALT_SEQ"/>
    <property type="molecule type" value="mRNA"/>
</dbReference>
<dbReference type="EMBL" id="AK127948">
    <property type="protein sequence ID" value="BAG54604.1"/>
    <property type="molecule type" value="mRNA"/>
</dbReference>
<dbReference type="EMBL" id="AK128471">
    <property type="protein sequence ID" value="BAG54682.1"/>
    <property type="molecule type" value="mRNA"/>
</dbReference>
<dbReference type="EMBL" id="AC003002">
    <property type="status" value="NOT_ANNOTATED_CDS"/>
    <property type="molecule type" value="Genomic_DNA"/>
</dbReference>
<dbReference type="EMBL" id="AB075827">
    <property type="protein sequence ID" value="BAB85533.1"/>
    <property type="molecule type" value="mRNA"/>
</dbReference>
<dbReference type="EMBL" id="X52341">
    <property type="protein sequence ID" value="CAA36567.1"/>
    <property type="molecule type" value="mRNA"/>
</dbReference>
<dbReference type="CCDS" id="CCDS42636.1">
    <molecule id="P17021-1"/>
</dbReference>
<dbReference type="CCDS" id="CCDS82405.1">
    <molecule id="P17021-2"/>
</dbReference>
<dbReference type="PIR" id="I37949">
    <property type="entry name" value="S10398"/>
</dbReference>
<dbReference type="RefSeq" id="NP_001317546.1">
    <molecule id="P17021-2"/>
    <property type="nucleotide sequence ID" value="NM_001330617.2"/>
</dbReference>
<dbReference type="RefSeq" id="NP_008890.2">
    <molecule id="P17021-1"/>
    <property type="nucleotide sequence ID" value="NM_006959.3"/>
</dbReference>
<dbReference type="RefSeq" id="XP_047295267.1">
    <molecule id="P17021-2"/>
    <property type="nucleotide sequence ID" value="XM_047439311.1"/>
</dbReference>
<dbReference type="RefSeq" id="XP_054177922.1">
    <molecule id="P17021-2"/>
    <property type="nucleotide sequence ID" value="XM_054321947.1"/>
</dbReference>
<dbReference type="SMR" id="P17021"/>
<dbReference type="BioGRID" id="113396">
    <property type="interactions" value="41"/>
</dbReference>
<dbReference type="FunCoup" id="P17021">
    <property type="interactions" value="59"/>
</dbReference>
<dbReference type="IntAct" id="P17021">
    <property type="interactions" value="34"/>
</dbReference>
<dbReference type="STRING" id="9606.ENSP00000302455"/>
<dbReference type="GlyGen" id="P17021">
    <property type="glycosylation" value="1 site, 1 O-linked glycan (1 site)"/>
</dbReference>
<dbReference type="iPTMnet" id="P17021"/>
<dbReference type="PhosphoSitePlus" id="P17021"/>
<dbReference type="BioMuta" id="ZNF17"/>
<dbReference type="DMDM" id="229485310"/>
<dbReference type="jPOST" id="P17021"/>
<dbReference type="MassIVE" id="P17021"/>
<dbReference type="PaxDb" id="9606-ENSP00000471905"/>
<dbReference type="PeptideAtlas" id="P17021"/>
<dbReference type="ProteomicsDB" id="53417">
    <molecule id="P17021-1"/>
</dbReference>
<dbReference type="ProteomicsDB" id="53418">
    <molecule id="P17021-2"/>
</dbReference>
<dbReference type="ProteomicsDB" id="53419">
    <molecule id="P17021-3"/>
</dbReference>
<dbReference type="Antibodypedia" id="9873">
    <property type="antibodies" value="40 antibodies from 11 providers"/>
</dbReference>
<dbReference type="DNASU" id="7565"/>
<dbReference type="Ensembl" id="ENST00000307658.12">
    <molecule id="P17021-2"/>
    <property type="protein sequence ID" value="ENSP00000302455.7"/>
    <property type="gene ID" value="ENSG00000186272.13"/>
</dbReference>
<dbReference type="Ensembl" id="ENST00000601808.1">
    <molecule id="P17021-1"/>
    <property type="protein sequence ID" value="ENSP00000471905.1"/>
    <property type="gene ID" value="ENSG00000186272.13"/>
</dbReference>
<dbReference type="GeneID" id="7565"/>
<dbReference type="KEGG" id="hsa:7565"/>
<dbReference type="MANE-Select" id="ENST00000307658.12">
    <molecule id="P17021-2"/>
    <property type="protein sequence ID" value="ENSP00000302455.7"/>
    <property type="RefSeq nucleotide sequence ID" value="NM_001330617.2"/>
    <property type="RefSeq protein sequence ID" value="NP_001317546.1"/>
</dbReference>
<dbReference type="UCSC" id="uc002qoo.2">
    <molecule id="P17021-1"/>
    <property type="organism name" value="human"/>
</dbReference>
<dbReference type="AGR" id="HGNC:12958"/>
<dbReference type="CTD" id="7565"/>
<dbReference type="GeneCards" id="ZNF17"/>
<dbReference type="HGNC" id="HGNC:12958">
    <property type="gene designation" value="ZNF17"/>
</dbReference>
<dbReference type="HPA" id="ENSG00000186272">
    <property type="expression patterns" value="Low tissue specificity"/>
</dbReference>
<dbReference type="MalaCards" id="ZNF17"/>
<dbReference type="MIM" id="619254">
    <property type="type" value="gene"/>
</dbReference>
<dbReference type="neXtProt" id="NX_P17021"/>
<dbReference type="PharmGKB" id="PA37540"/>
<dbReference type="VEuPathDB" id="HostDB:ENSG00000186272"/>
<dbReference type="eggNOG" id="KOG1721">
    <property type="taxonomic scope" value="Eukaryota"/>
</dbReference>
<dbReference type="GeneTree" id="ENSGT00940000164515"/>
<dbReference type="HOGENOM" id="CLU_002678_17_1_1"/>
<dbReference type="InParanoid" id="P17021"/>
<dbReference type="OMA" id="HTKEYCK"/>
<dbReference type="OrthoDB" id="654211at2759"/>
<dbReference type="PAN-GO" id="P17021">
    <property type="GO annotations" value="4 GO annotations based on evolutionary models"/>
</dbReference>
<dbReference type="PhylomeDB" id="P17021"/>
<dbReference type="TreeFam" id="TF339848"/>
<dbReference type="PathwayCommons" id="P17021"/>
<dbReference type="Reactome" id="R-HSA-212436">
    <property type="pathway name" value="Generic Transcription Pathway"/>
</dbReference>
<dbReference type="SignaLink" id="P17021"/>
<dbReference type="BioGRID-ORCS" id="7565">
    <property type="hits" value="8 hits in 1178 CRISPR screens"/>
</dbReference>
<dbReference type="GenomeRNAi" id="7565"/>
<dbReference type="Pharos" id="P17021">
    <property type="development level" value="Tdark"/>
</dbReference>
<dbReference type="PRO" id="PR:P17021"/>
<dbReference type="Proteomes" id="UP000005640">
    <property type="component" value="Chromosome 19"/>
</dbReference>
<dbReference type="RNAct" id="P17021">
    <property type="molecule type" value="protein"/>
</dbReference>
<dbReference type="Bgee" id="ENSG00000186272">
    <property type="expression patterns" value="Expressed in primordial germ cell in gonad and 108 other cell types or tissues"/>
</dbReference>
<dbReference type="ExpressionAtlas" id="P17021">
    <property type="expression patterns" value="baseline and differential"/>
</dbReference>
<dbReference type="GO" id="GO:0005634">
    <property type="term" value="C:nucleus"/>
    <property type="evidence" value="ECO:0000318"/>
    <property type="project" value="GO_Central"/>
</dbReference>
<dbReference type="GO" id="GO:0000981">
    <property type="term" value="F:DNA-binding transcription factor activity, RNA polymerase II-specific"/>
    <property type="evidence" value="ECO:0000318"/>
    <property type="project" value="GO_Central"/>
</dbReference>
<dbReference type="GO" id="GO:0000978">
    <property type="term" value="F:RNA polymerase II cis-regulatory region sequence-specific DNA binding"/>
    <property type="evidence" value="ECO:0000318"/>
    <property type="project" value="GO_Central"/>
</dbReference>
<dbReference type="GO" id="GO:0008270">
    <property type="term" value="F:zinc ion binding"/>
    <property type="evidence" value="ECO:0007669"/>
    <property type="project" value="UniProtKB-KW"/>
</dbReference>
<dbReference type="GO" id="GO:0006357">
    <property type="term" value="P:regulation of transcription by RNA polymerase II"/>
    <property type="evidence" value="ECO:0000318"/>
    <property type="project" value="GO_Central"/>
</dbReference>
<dbReference type="CDD" id="cd07765">
    <property type="entry name" value="KRAB_A-box"/>
    <property type="match status" value="1"/>
</dbReference>
<dbReference type="FunFam" id="3.30.160.60:FF:001766">
    <property type="entry name" value="Zinc finger protein 17"/>
    <property type="match status" value="1"/>
</dbReference>
<dbReference type="FunFam" id="3.30.160.60:FF:000352">
    <property type="entry name" value="zinc finger protein 3 homolog"/>
    <property type="match status" value="1"/>
</dbReference>
<dbReference type="FunFam" id="3.30.160.60:FF:002343">
    <property type="entry name" value="Zinc finger protein 33A"/>
    <property type="match status" value="1"/>
</dbReference>
<dbReference type="FunFam" id="3.30.160.60:FF:000127">
    <property type="entry name" value="Zinc finger protein 354C"/>
    <property type="match status" value="1"/>
</dbReference>
<dbReference type="FunFam" id="3.30.160.60:FF:000016">
    <property type="entry name" value="zinc finger protein 37 homolog"/>
    <property type="match status" value="1"/>
</dbReference>
<dbReference type="FunFam" id="3.30.160.60:FF:000443">
    <property type="entry name" value="Zinc finger protein 41"/>
    <property type="match status" value="2"/>
</dbReference>
<dbReference type="FunFam" id="3.30.160.60:FF:000519">
    <property type="entry name" value="Zinc finger protein 470"/>
    <property type="match status" value="3"/>
</dbReference>
<dbReference type="FunFam" id="3.30.160.60:FF:001174">
    <property type="entry name" value="zinc finger protein 527 isoform X1"/>
    <property type="match status" value="1"/>
</dbReference>
<dbReference type="FunFam" id="3.30.160.60:FF:000281">
    <property type="entry name" value="Zinc finger protein 558 isoform X1"/>
    <property type="match status" value="1"/>
</dbReference>
<dbReference type="FunFam" id="3.30.160.60:FF:001270">
    <property type="entry name" value="zinc finger protein 583 isoform X1"/>
    <property type="match status" value="1"/>
</dbReference>
<dbReference type="FunFam" id="3.30.160.60:FF:000098">
    <property type="entry name" value="Zinc finger protein 614"/>
    <property type="match status" value="3"/>
</dbReference>
<dbReference type="Gene3D" id="6.10.140.140">
    <property type="match status" value="1"/>
</dbReference>
<dbReference type="Gene3D" id="3.30.160.60">
    <property type="entry name" value="Classic Zinc Finger"/>
    <property type="match status" value="17"/>
</dbReference>
<dbReference type="InterPro" id="IPR001909">
    <property type="entry name" value="KRAB"/>
</dbReference>
<dbReference type="InterPro" id="IPR036051">
    <property type="entry name" value="KRAB_dom_sf"/>
</dbReference>
<dbReference type="InterPro" id="IPR036236">
    <property type="entry name" value="Znf_C2H2_sf"/>
</dbReference>
<dbReference type="InterPro" id="IPR013087">
    <property type="entry name" value="Znf_C2H2_type"/>
</dbReference>
<dbReference type="PANTHER" id="PTHR24376">
    <property type="entry name" value="ZINC FINGER PROTEIN"/>
    <property type="match status" value="1"/>
</dbReference>
<dbReference type="PANTHER" id="PTHR24376:SF189">
    <property type="entry name" value="ZINC FINGER PROTEIN 544-RELATED"/>
    <property type="match status" value="1"/>
</dbReference>
<dbReference type="Pfam" id="PF01352">
    <property type="entry name" value="KRAB"/>
    <property type="match status" value="1"/>
</dbReference>
<dbReference type="Pfam" id="PF00096">
    <property type="entry name" value="zf-C2H2"/>
    <property type="match status" value="17"/>
</dbReference>
<dbReference type="SMART" id="SM00349">
    <property type="entry name" value="KRAB"/>
    <property type="match status" value="1"/>
</dbReference>
<dbReference type="SMART" id="SM00355">
    <property type="entry name" value="ZnF_C2H2"/>
    <property type="match status" value="18"/>
</dbReference>
<dbReference type="SUPFAM" id="SSF57667">
    <property type="entry name" value="beta-beta-alpha zinc fingers"/>
    <property type="match status" value="9"/>
</dbReference>
<dbReference type="SUPFAM" id="SSF109640">
    <property type="entry name" value="KRAB domain (Kruppel-associated box)"/>
    <property type="match status" value="1"/>
</dbReference>
<dbReference type="PROSITE" id="PS50805">
    <property type="entry name" value="KRAB"/>
    <property type="match status" value="1"/>
</dbReference>
<dbReference type="PROSITE" id="PS00028">
    <property type="entry name" value="ZINC_FINGER_C2H2_1"/>
    <property type="match status" value="18"/>
</dbReference>
<dbReference type="PROSITE" id="PS50157">
    <property type="entry name" value="ZINC_FINGER_C2H2_2"/>
    <property type="match status" value="17"/>
</dbReference>
<proteinExistence type="evidence at protein level"/>
<gene>
    <name type="primary">ZNF17</name>
    <name type="synonym">KIAA1947</name>
    <name type="synonym">KOX10</name>
</gene>
<organism>
    <name type="scientific">Homo sapiens</name>
    <name type="common">Human</name>
    <dbReference type="NCBI Taxonomy" id="9606"/>
    <lineage>
        <taxon>Eukaryota</taxon>
        <taxon>Metazoa</taxon>
        <taxon>Chordata</taxon>
        <taxon>Craniata</taxon>
        <taxon>Vertebrata</taxon>
        <taxon>Euteleostomi</taxon>
        <taxon>Mammalia</taxon>
        <taxon>Eutheria</taxon>
        <taxon>Euarchontoglires</taxon>
        <taxon>Primates</taxon>
        <taxon>Haplorrhini</taxon>
        <taxon>Catarrhini</taxon>
        <taxon>Hominidae</taxon>
        <taxon>Homo</taxon>
    </lineage>
</organism>
<reference key="1">
    <citation type="journal article" date="2004" name="Nat. Genet.">
        <title>Complete sequencing and characterization of 21,243 full-length human cDNAs.</title>
        <authorList>
            <person name="Ota T."/>
            <person name="Suzuki Y."/>
            <person name="Nishikawa T."/>
            <person name="Otsuki T."/>
            <person name="Sugiyama T."/>
            <person name="Irie R."/>
            <person name="Wakamatsu A."/>
            <person name="Hayashi K."/>
            <person name="Sato H."/>
            <person name="Nagai K."/>
            <person name="Kimura K."/>
            <person name="Makita H."/>
            <person name="Sekine M."/>
            <person name="Obayashi M."/>
            <person name="Nishi T."/>
            <person name="Shibahara T."/>
            <person name="Tanaka T."/>
            <person name="Ishii S."/>
            <person name="Yamamoto J."/>
            <person name="Saito K."/>
            <person name="Kawai Y."/>
            <person name="Isono Y."/>
            <person name="Nakamura Y."/>
            <person name="Nagahari K."/>
            <person name="Murakami K."/>
            <person name="Yasuda T."/>
            <person name="Iwayanagi T."/>
            <person name="Wagatsuma M."/>
            <person name="Shiratori A."/>
            <person name="Sudo H."/>
            <person name="Hosoiri T."/>
            <person name="Kaku Y."/>
            <person name="Kodaira H."/>
            <person name="Kondo H."/>
            <person name="Sugawara M."/>
            <person name="Takahashi M."/>
            <person name="Kanda K."/>
            <person name="Yokoi T."/>
            <person name="Furuya T."/>
            <person name="Kikkawa E."/>
            <person name="Omura Y."/>
            <person name="Abe K."/>
            <person name="Kamihara K."/>
            <person name="Katsuta N."/>
            <person name="Sato K."/>
            <person name="Tanikawa M."/>
            <person name="Yamazaki M."/>
            <person name="Ninomiya K."/>
            <person name="Ishibashi T."/>
            <person name="Yamashita H."/>
            <person name="Murakawa K."/>
            <person name="Fujimori K."/>
            <person name="Tanai H."/>
            <person name="Kimata M."/>
            <person name="Watanabe M."/>
            <person name="Hiraoka S."/>
            <person name="Chiba Y."/>
            <person name="Ishida S."/>
            <person name="Ono Y."/>
            <person name="Takiguchi S."/>
            <person name="Watanabe S."/>
            <person name="Yosida M."/>
            <person name="Hotuta T."/>
            <person name="Kusano J."/>
            <person name="Kanehori K."/>
            <person name="Takahashi-Fujii A."/>
            <person name="Hara H."/>
            <person name="Tanase T.-O."/>
            <person name="Nomura Y."/>
            <person name="Togiya S."/>
            <person name="Komai F."/>
            <person name="Hara R."/>
            <person name="Takeuchi K."/>
            <person name="Arita M."/>
            <person name="Imose N."/>
            <person name="Musashino K."/>
            <person name="Yuuki H."/>
            <person name="Oshima A."/>
            <person name="Sasaki N."/>
            <person name="Aotsuka S."/>
            <person name="Yoshikawa Y."/>
            <person name="Matsunawa H."/>
            <person name="Ichihara T."/>
            <person name="Shiohata N."/>
            <person name="Sano S."/>
            <person name="Moriya S."/>
            <person name="Momiyama H."/>
            <person name="Satoh N."/>
            <person name="Takami S."/>
            <person name="Terashima Y."/>
            <person name="Suzuki O."/>
            <person name="Nakagawa S."/>
            <person name="Senoh A."/>
            <person name="Mizoguchi H."/>
            <person name="Goto Y."/>
            <person name="Shimizu F."/>
            <person name="Wakebe H."/>
            <person name="Hishigaki H."/>
            <person name="Watanabe T."/>
            <person name="Sugiyama A."/>
            <person name="Takemoto M."/>
            <person name="Kawakami B."/>
            <person name="Yamazaki M."/>
            <person name="Watanabe K."/>
            <person name="Kumagai A."/>
            <person name="Itakura S."/>
            <person name="Fukuzumi Y."/>
            <person name="Fujimori Y."/>
            <person name="Komiyama M."/>
            <person name="Tashiro H."/>
            <person name="Tanigami A."/>
            <person name="Fujiwara T."/>
            <person name="Ono T."/>
            <person name="Yamada K."/>
            <person name="Fujii Y."/>
            <person name="Ozaki K."/>
            <person name="Hirao M."/>
            <person name="Ohmori Y."/>
            <person name="Kawabata A."/>
            <person name="Hikiji T."/>
            <person name="Kobatake N."/>
            <person name="Inagaki H."/>
            <person name="Ikema Y."/>
            <person name="Okamoto S."/>
            <person name="Okitani R."/>
            <person name="Kawakami T."/>
            <person name="Noguchi S."/>
            <person name="Itoh T."/>
            <person name="Shigeta K."/>
            <person name="Senba T."/>
            <person name="Matsumura K."/>
            <person name="Nakajima Y."/>
            <person name="Mizuno T."/>
            <person name="Morinaga M."/>
            <person name="Sasaki M."/>
            <person name="Togashi T."/>
            <person name="Oyama M."/>
            <person name="Hata H."/>
            <person name="Watanabe M."/>
            <person name="Komatsu T."/>
            <person name="Mizushima-Sugano J."/>
            <person name="Satoh T."/>
            <person name="Shirai Y."/>
            <person name="Takahashi Y."/>
            <person name="Nakagawa K."/>
            <person name="Okumura K."/>
            <person name="Nagase T."/>
            <person name="Nomura N."/>
            <person name="Kikuchi H."/>
            <person name="Masuho Y."/>
            <person name="Yamashita R."/>
            <person name="Nakai K."/>
            <person name="Yada T."/>
            <person name="Nakamura Y."/>
            <person name="Ohara O."/>
            <person name="Isogai T."/>
            <person name="Sugano S."/>
        </authorList>
    </citation>
    <scope>NUCLEOTIDE SEQUENCE [LARGE SCALE MRNA] (ISOFORMS 1; 2 AND 3)</scope>
    <source>
        <tissue>Liver</tissue>
        <tissue>Mesenchymal stem cell</tissue>
        <tissue>Spleen</tissue>
        <tissue>Trachea</tissue>
    </source>
</reference>
<reference key="2">
    <citation type="journal article" date="2004" name="Nature">
        <title>The DNA sequence and biology of human chromosome 19.</title>
        <authorList>
            <person name="Grimwood J."/>
            <person name="Gordon L.A."/>
            <person name="Olsen A.S."/>
            <person name="Terry A."/>
            <person name="Schmutz J."/>
            <person name="Lamerdin J.E."/>
            <person name="Hellsten U."/>
            <person name="Goodstein D."/>
            <person name="Couronne O."/>
            <person name="Tran-Gyamfi M."/>
            <person name="Aerts A."/>
            <person name="Altherr M."/>
            <person name="Ashworth L."/>
            <person name="Bajorek E."/>
            <person name="Black S."/>
            <person name="Branscomb E."/>
            <person name="Caenepeel S."/>
            <person name="Carrano A.V."/>
            <person name="Caoile C."/>
            <person name="Chan Y.M."/>
            <person name="Christensen M."/>
            <person name="Cleland C.A."/>
            <person name="Copeland A."/>
            <person name="Dalin E."/>
            <person name="Dehal P."/>
            <person name="Denys M."/>
            <person name="Detter J.C."/>
            <person name="Escobar J."/>
            <person name="Flowers D."/>
            <person name="Fotopulos D."/>
            <person name="Garcia C."/>
            <person name="Georgescu A.M."/>
            <person name="Glavina T."/>
            <person name="Gomez M."/>
            <person name="Gonzales E."/>
            <person name="Groza M."/>
            <person name="Hammon N."/>
            <person name="Hawkins T."/>
            <person name="Haydu L."/>
            <person name="Ho I."/>
            <person name="Huang W."/>
            <person name="Israni S."/>
            <person name="Jett J."/>
            <person name="Kadner K."/>
            <person name="Kimball H."/>
            <person name="Kobayashi A."/>
            <person name="Larionov V."/>
            <person name="Leem S.-H."/>
            <person name="Lopez F."/>
            <person name="Lou Y."/>
            <person name="Lowry S."/>
            <person name="Malfatti S."/>
            <person name="Martinez D."/>
            <person name="McCready P.M."/>
            <person name="Medina C."/>
            <person name="Morgan J."/>
            <person name="Nelson K."/>
            <person name="Nolan M."/>
            <person name="Ovcharenko I."/>
            <person name="Pitluck S."/>
            <person name="Pollard M."/>
            <person name="Popkie A.P."/>
            <person name="Predki P."/>
            <person name="Quan G."/>
            <person name="Ramirez L."/>
            <person name="Rash S."/>
            <person name="Retterer J."/>
            <person name="Rodriguez A."/>
            <person name="Rogers S."/>
            <person name="Salamov A."/>
            <person name="Salazar A."/>
            <person name="She X."/>
            <person name="Smith D."/>
            <person name="Slezak T."/>
            <person name="Solovyev V."/>
            <person name="Thayer N."/>
            <person name="Tice H."/>
            <person name="Tsai M."/>
            <person name="Ustaszewska A."/>
            <person name="Vo N."/>
            <person name="Wagner M."/>
            <person name="Wheeler J."/>
            <person name="Wu K."/>
            <person name="Xie G."/>
            <person name="Yang J."/>
            <person name="Dubchak I."/>
            <person name="Furey T.S."/>
            <person name="DeJong P."/>
            <person name="Dickson M."/>
            <person name="Gordon D."/>
            <person name="Eichler E.E."/>
            <person name="Pennacchio L.A."/>
            <person name="Richardson P."/>
            <person name="Stubbs L."/>
            <person name="Rokhsar D.S."/>
            <person name="Myers R.M."/>
            <person name="Rubin E.M."/>
            <person name="Lucas S.M."/>
        </authorList>
    </citation>
    <scope>NUCLEOTIDE SEQUENCE [LARGE SCALE GENOMIC DNA]</scope>
</reference>
<reference key="3">
    <citation type="journal article" date="2001" name="DNA Res.">
        <title>Prediction of the coding sequences of unidentified human genes. XXII. The complete sequences of 50 new cDNA clones which code for large proteins.</title>
        <authorList>
            <person name="Nagase T."/>
            <person name="Kikuno R."/>
            <person name="Ohara O."/>
        </authorList>
    </citation>
    <scope>NUCLEOTIDE SEQUENCE [LARGE SCALE MRNA] OF 55-662 (ISOFORMS 1/2/3)</scope>
    <source>
        <tissue>Brain</tissue>
    </source>
</reference>
<reference key="4">
    <citation type="journal article" date="1990" name="New Biol.">
        <title>Multiple genes encoding zinc finger domains are expressed in human T cells.</title>
        <authorList>
            <person name="Thiesen H.-J."/>
        </authorList>
    </citation>
    <scope>NUCLEOTIDE SEQUENCE [MRNA] OF 442-497 (ISOFORMS 1/2/3)</scope>
    <source>
        <tissue>Lymphoid tissue</tissue>
    </source>
</reference>